<keyword id="KW-0028">Amino-acid biosynthesis</keyword>
<keyword id="KW-0057">Aromatic amino acid biosynthesis</keyword>
<keyword id="KW-0456">Lyase</keyword>
<keyword id="KW-1185">Reference proteome</keyword>
<keyword id="KW-0822">Tryptophan biosynthesis</keyword>
<gene>
    <name evidence="1" type="primary">trpA</name>
    <name type="ordered locus">HVO_0789</name>
</gene>
<dbReference type="EC" id="4.2.1.20" evidence="1"/>
<dbReference type="EMBL" id="M36177">
    <property type="protein sequence ID" value="AAA72864.1"/>
    <property type="molecule type" value="Genomic_DNA"/>
</dbReference>
<dbReference type="EMBL" id="CP001956">
    <property type="protein sequence ID" value="ADE05134.1"/>
    <property type="molecule type" value="Genomic_DNA"/>
</dbReference>
<dbReference type="PIR" id="A36044">
    <property type="entry name" value="A36044"/>
</dbReference>
<dbReference type="RefSeq" id="WP_004044148.1">
    <property type="nucleotide sequence ID" value="NC_013967.1"/>
</dbReference>
<dbReference type="SMR" id="P18284"/>
<dbReference type="STRING" id="309800.HVO_0789"/>
<dbReference type="PaxDb" id="309800-C498_14788"/>
<dbReference type="EnsemblBacteria" id="ADE05134">
    <property type="protein sequence ID" value="ADE05134"/>
    <property type="gene ID" value="HVO_0789"/>
</dbReference>
<dbReference type="GeneID" id="8924299"/>
<dbReference type="KEGG" id="hvo:HVO_0789"/>
<dbReference type="eggNOG" id="arCOG01086">
    <property type="taxonomic scope" value="Archaea"/>
</dbReference>
<dbReference type="HOGENOM" id="CLU_016734_0_0_2"/>
<dbReference type="OrthoDB" id="25658at2157"/>
<dbReference type="UniPathway" id="UPA00035">
    <property type="reaction ID" value="UER00044"/>
</dbReference>
<dbReference type="Proteomes" id="UP000008243">
    <property type="component" value="Chromosome"/>
</dbReference>
<dbReference type="GO" id="GO:0005829">
    <property type="term" value="C:cytosol"/>
    <property type="evidence" value="ECO:0007669"/>
    <property type="project" value="TreeGrafter"/>
</dbReference>
<dbReference type="GO" id="GO:0004834">
    <property type="term" value="F:tryptophan synthase activity"/>
    <property type="evidence" value="ECO:0007669"/>
    <property type="project" value="UniProtKB-UniRule"/>
</dbReference>
<dbReference type="CDD" id="cd04724">
    <property type="entry name" value="Tryptophan_synthase_alpha"/>
    <property type="match status" value="1"/>
</dbReference>
<dbReference type="FunFam" id="3.20.20.70:FF:000037">
    <property type="entry name" value="Tryptophan synthase alpha chain"/>
    <property type="match status" value="1"/>
</dbReference>
<dbReference type="Gene3D" id="3.20.20.70">
    <property type="entry name" value="Aldolase class I"/>
    <property type="match status" value="1"/>
</dbReference>
<dbReference type="HAMAP" id="MF_00131">
    <property type="entry name" value="Trp_synth_alpha"/>
    <property type="match status" value="1"/>
</dbReference>
<dbReference type="InterPro" id="IPR013785">
    <property type="entry name" value="Aldolase_TIM"/>
</dbReference>
<dbReference type="InterPro" id="IPR011060">
    <property type="entry name" value="RibuloseP-bd_barrel"/>
</dbReference>
<dbReference type="InterPro" id="IPR018204">
    <property type="entry name" value="Trp_synthase_alpha_AS"/>
</dbReference>
<dbReference type="InterPro" id="IPR002028">
    <property type="entry name" value="Trp_synthase_suA"/>
</dbReference>
<dbReference type="NCBIfam" id="TIGR00262">
    <property type="entry name" value="trpA"/>
    <property type="match status" value="1"/>
</dbReference>
<dbReference type="PANTHER" id="PTHR43406:SF1">
    <property type="entry name" value="TRYPTOPHAN SYNTHASE ALPHA CHAIN, CHLOROPLASTIC"/>
    <property type="match status" value="1"/>
</dbReference>
<dbReference type="PANTHER" id="PTHR43406">
    <property type="entry name" value="TRYPTOPHAN SYNTHASE, ALPHA CHAIN"/>
    <property type="match status" value="1"/>
</dbReference>
<dbReference type="Pfam" id="PF00290">
    <property type="entry name" value="Trp_syntA"/>
    <property type="match status" value="1"/>
</dbReference>
<dbReference type="SUPFAM" id="SSF51366">
    <property type="entry name" value="Ribulose-phoshate binding barrel"/>
    <property type="match status" value="1"/>
</dbReference>
<dbReference type="PROSITE" id="PS00167">
    <property type="entry name" value="TRP_SYNTHASE_ALPHA"/>
    <property type="match status" value="1"/>
</dbReference>
<name>TRPA_HALVD</name>
<feature type="chain" id="PRO_0000098887" description="Tryptophan synthase alpha chain">
    <location>
        <begin position="1"/>
        <end position="277"/>
    </location>
</feature>
<feature type="active site" description="Proton acceptor" evidence="1">
    <location>
        <position position="43"/>
    </location>
</feature>
<feature type="active site" description="Proton acceptor">
    <location>
        <position position="54"/>
    </location>
</feature>
<feature type="sequence conflict" description="In Ref. 1; AAA72864." evidence="3" ref="1">
    <original>T</original>
    <variation>R</variation>
    <location>
        <position position="92"/>
    </location>
</feature>
<evidence type="ECO:0000255" key="1">
    <source>
        <dbReference type="HAMAP-Rule" id="MF_00131"/>
    </source>
</evidence>
<evidence type="ECO:0000269" key="2">
    <source>
    </source>
</evidence>
<evidence type="ECO:0000305" key="3"/>
<reference key="1">
    <citation type="journal article" date="1990" name="Proc. Natl. Acad. Sci. U.S.A.">
        <title>Genes for tryptophan biosynthesis in the archaebacterium Haloferax volcanii.</title>
        <authorList>
            <person name="Lam W.L."/>
            <person name="Cohen A."/>
            <person name="Tsouluhas D."/>
            <person name="Doolittle W.F."/>
        </authorList>
    </citation>
    <scope>NUCLEOTIDE SEQUENCE [GENOMIC DNA]</scope>
    <source>
        <strain>DS2 / DSM 5716 / WFD11</strain>
    </source>
</reference>
<reference key="2">
    <citation type="journal article" date="2010" name="PLoS ONE">
        <title>The complete genome sequence of Haloferax volcanii DS2, a model archaeon.</title>
        <authorList>
            <person name="Hartman A.L."/>
            <person name="Norais C."/>
            <person name="Badger J.H."/>
            <person name="Delmas S."/>
            <person name="Haldenby S."/>
            <person name="Madupu R."/>
            <person name="Robinson J."/>
            <person name="Khouri H."/>
            <person name="Ren Q."/>
            <person name="Lowe T.M."/>
            <person name="Maupin-Furlow J."/>
            <person name="Pohlschroder M."/>
            <person name="Daniels C."/>
            <person name="Pfeiffer F."/>
            <person name="Allers T."/>
            <person name="Eisen J.A."/>
        </authorList>
    </citation>
    <scope>NUCLEOTIDE SEQUENCE [LARGE SCALE GENOMIC DNA]</scope>
    <source>
        <strain>ATCC 29605 / DSM 3757 / JCM 8879 / NBRC 14742 / NCIMB 2012 / VKM B-1768 / DS2</strain>
    </source>
</reference>
<reference key="3">
    <citation type="journal article" date="2004" name="Appl. Environ. Microbiol.">
        <title>Development of additional selectable markers for the halophilic archaeon Haloferax volcanii based on the leuB and trpA genes.</title>
        <authorList>
            <person name="Allers T."/>
            <person name="Ngo H.-P."/>
            <person name="Mevarech M."/>
            <person name="Lloyd R.G."/>
        </authorList>
    </citation>
    <scope>FUNCTION</scope>
    <scope>DISRUPTION PHENOTYPE</scope>
    <source>
        <strain>DS2 / DS70</strain>
    </source>
</reference>
<accession>P18284</accession>
<accession>D4GU19</accession>
<sequence>MSLEDAFSDGPAFVPYLAAGDPDYESSLEYVEALERGGADVIELGLPFSEPIAEGPTIQNAVVRSLEGGMTPTRFFEFVEDLDVSVPLVCMTYYNLIYRYGDEPGPRPFVEKAAEVGIEGFVVPDLPAEEAGPLREACDEFGLDLVFIVAPTTRGERLDRIMEQVSGYVYVQARLGTTGAQSSVSDQTDSSLERLTDYDVPKAVGFGISDGDHAERIVASGADGIIVGSALVDIVAEGHENGDDAETVADRLETLARELEDGAVAGASQRPPHPERT</sequence>
<organism>
    <name type="scientific">Haloferax volcanii (strain ATCC 29605 / DSM 3757 / JCM 8879 / NBRC 14742 / NCIMB 2012 / VKM B-1768 / DS2)</name>
    <name type="common">Halobacterium volcanii</name>
    <dbReference type="NCBI Taxonomy" id="309800"/>
    <lineage>
        <taxon>Archaea</taxon>
        <taxon>Methanobacteriati</taxon>
        <taxon>Methanobacteriota</taxon>
        <taxon>Stenosarchaea group</taxon>
        <taxon>Halobacteria</taxon>
        <taxon>Halobacteriales</taxon>
        <taxon>Haloferacaceae</taxon>
        <taxon>Haloferax</taxon>
    </lineage>
</organism>
<proteinExistence type="inferred from homology"/>
<comment type="function">
    <text evidence="1 2">The alpha subunit is responsible for the aldol cleavage of indoleglycerol phosphate to indole and glyceraldehyde 3-phosphate.</text>
</comment>
<comment type="catalytic activity">
    <reaction evidence="1">
        <text>(1S,2R)-1-C-(indol-3-yl)glycerol 3-phosphate + L-serine = D-glyceraldehyde 3-phosphate + L-tryptophan + H2O</text>
        <dbReference type="Rhea" id="RHEA:10532"/>
        <dbReference type="ChEBI" id="CHEBI:15377"/>
        <dbReference type="ChEBI" id="CHEBI:33384"/>
        <dbReference type="ChEBI" id="CHEBI:57912"/>
        <dbReference type="ChEBI" id="CHEBI:58866"/>
        <dbReference type="ChEBI" id="CHEBI:59776"/>
        <dbReference type="EC" id="4.2.1.20"/>
    </reaction>
</comment>
<comment type="pathway">
    <text evidence="1">Amino-acid biosynthesis; L-tryptophan biosynthesis; L-tryptophan from chorismate: step 5/5.</text>
</comment>
<comment type="subunit">
    <text evidence="1">Tetramer of two alpha and two beta chains.</text>
</comment>
<comment type="disruption phenotype">
    <text evidence="2">Auxotrophic for tryptophan.</text>
</comment>
<comment type="similarity">
    <text evidence="1">Belongs to the TrpA family.</text>
</comment>
<protein>
    <recommendedName>
        <fullName evidence="1">Tryptophan synthase alpha chain</fullName>
        <ecNumber evidence="1">4.2.1.20</ecNumber>
    </recommendedName>
</protein>